<feature type="chain" id="PRO_1000138204" description="Regulator of sigma D">
    <location>
        <begin position="1"/>
        <end position="162"/>
    </location>
</feature>
<keyword id="KW-0963">Cytoplasm</keyword>
<keyword id="KW-0804">Transcription</keyword>
<keyword id="KW-0805">Transcription regulation</keyword>
<sequence>MLNQLENLTERVGGSNKLVDRWLDVRKHLLVAYYNLVGIKPGKESYMRLNEKALDNFCQSLVDYLSAGHFSIYERILHKLEGNGQLLHAAKIWPLLEDNTQRIMDYYDTSLETAIDHDNCLEFQQALSDIGEALEARFVLEDKLIMLVFDAMHDGARVKRPA</sequence>
<gene>
    <name evidence="1" type="primary">rsd</name>
    <name type="ordered locus">SeSA_A4376</name>
</gene>
<proteinExistence type="inferred from homology"/>
<name>RSD_SALSV</name>
<evidence type="ECO:0000255" key="1">
    <source>
        <dbReference type="HAMAP-Rule" id="MF_01181"/>
    </source>
</evidence>
<protein>
    <recommendedName>
        <fullName evidence="1">Regulator of sigma D</fullName>
    </recommendedName>
</protein>
<accession>B4TQK5</accession>
<organism>
    <name type="scientific">Salmonella schwarzengrund (strain CVM19633)</name>
    <dbReference type="NCBI Taxonomy" id="439843"/>
    <lineage>
        <taxon>Bacteria</taxon>
        <taxon>Pseudomonadati</taxon>
        <taxon>Pseudomonadota</taxon>
        <taxon>Gammaproteobacteria</taxon>
        <taxon>Enterobacterales</taxon>
        <taxon>Enterobacteriaceae</taxon>
        <taxon>Salmonella</taxon>
    </lineage>
</organism>
<reference key="1">
    <citation type="journal article" date="2011" name="J. Bacteriol.">
        <title>Comparative genomics of 28 Salmonella enterica isolates: evidence for CRISPR-mediated adaptive sublineage evolution.</title>
        <authorList>
            <person name="Fricke W.F."/>
            <person name="Mammel M.K."/>
            <person name="McDermott P.F."/>
            <person name="Tartera C."/>
            <person name="White D.G."/>
            <person name="Leclerc J.E."/>
            <person name="Ravel J."/>
            <person name="Cebula T.A."/>
        </authorList>
    </citation>
    <scope>NUCLEOTIDE SEQUENCE [LARGE SCALE GENOMIC DNA]</scope>
    <source>
        <strain>CVM19633</strain>
    </source>
</reference>
<comment type="function">
    <text evidence="1">Binds RpoD and negatively regulates RpoD-mediated transcription activation by preventing the interaction between the primary sigma factor RpoD with the catalytic core of the RNA polymerase and with promoter DNA. May be involved in replacement of the RNA polymerase sigma subunit from RpoD to RpoS during the transition from exponential growth to the stationary phase.</text>
</comment>
<comment type="subunit">
    <text evidence="1">Interacts with RpoD.</text>
</comment>
<comment type="subcellular location">
    <subcellularLocation>
        <location evidence="1">Cytoplasm</location>
    </subcellularLocation>
</comment>
<comment type="similarity">
    <text evidence="1">Belongs to the Rsd/AlgQ family.</text>
</comment>
<dbReference type="EMBL" id="CP001127">
    <property type="protein sequence ID" value="ACF90735.1"/>
    <property type="molecule type" value="Genomic_DNA"/>
</dbReference>
<dbReference type="RefSeq" id="WP_000934317.1">
    <property type="nucleotide sequence ID" value="NC_011094.1"/>
</dbReference>
<dbReference type="SMR" id="B4TQK5"/>
<dbReference type="KEGG" id="sew:SeSA_A4376"/>
<dbReference type="HOGENOM" id="CLU_142729_0_0_6"/>
<dbReference type="Proteomes" id="UP000001865">
    <property type="component" value="Chromosome"/>
</dbReference>
<dbReference type="GO" id="GO:0005737">
    <property type="term" value="C:cytoplasm"/>
    <property type="evidence" value="ECO:0007669"/>
    <property type="project" value="UniProtKB-SubCell"/>
</dbReference>
<dbReference type="GO" id="GO:0006355">
    <property type="term" value="P:regulation of DNA-templated transcription"/>
    <property type="evidence" value="ECO:0007669"/>
    <property type="project" value="InterPro"/>
</dbReference>
<dbReference type="FunFam" id="1.20.120.1370:FF:000001">
    <property type="entry name" value="Regulator of sigma D"/>
    <property type="match status" value="1"/>
</dbReference>
<dbReference type="Gene3D" id="1.20.120.1370">
    <property type="entry name" value="Regulator of RNA polymerase sigma(70) subunit, domain 4"/>
    <property type="match status" value="1"/>
</dbReference>
<dbReference type="HAMAP" id="MF_01181">
    <property type="entry name" value="Rsd"/>
    <property type="match status" value="1"/>
</dbReference>
<dbReference type="InterPro" id="IPR038309">
    <property type="entry name" value="Rsd/AlgQ_sf"/>
</dbReference>
<dbReference type="InterPro" id="IPR023785">
    <property type="entry name" value="Sigma70_reg_Rsd"/>
</dbReference>
<dbReference type="InterPro" id="IPR007448">
    <property type="entry name" value="Sigma70_reg_Rsd_AlgQ"/>
</dbReference>
<dbReference type="NCBIfam" id="NF008723">
    <property type="entry name" value="PRK11718.1"/>
    <property type="match status" value="1"/>
</dbReference>
<dbReference type="Pfam" id="PF04353">
    <property type="entry name" value="Rsd_AlgQ"/>
    <property type="match status" value="1"/>
</dbReference>
<dbReference type="PIRSF" id="PIRSF016548">
    <property type="entry name" value="Rsd_AlgQ"/>
    <property type="match status" value="1"/>
</dbReference>